<reference key="1">
    <citation type="journal article" date="2002" name="Nature">
        <title>The genome sequence of Schizosaccharomyces pombe.</title>
        <authorList>
            <person name="Wood V."/>
            <person name="Gwilliam R."/>
            <person name="Rajandream M.A."/>
            <person name="Lyne M.H."/>
            <person name="Lyne R."/>
            <person name="Stewart A."/>
            <person name="Sgouros J.G."/>
            <person name="Peat N."/>
            <person name="Hayles J."/>
            <person name="Baker S.G."/>
            <person name="Basham D."/>
            <person name="Bowman S."/>
            <person name="Brooks K."/>
            <person name="Brown D."/>
            <person name="Brown S."/>
            <person name="Chillingworth T."/>
            <person name="Churcher C.M."/>
            <person name="Collins M."/>
            <person name="Connor R."/>
            <person name="Cronin A."/>
            <person name="Davis P."/>
            <person name="Feltwell T."/>
            <person name="Fraser A."/>
            <person name="Gentles S."/>
            <person name="Goble A."/>
            <person name="Hamlin N."/>
            <person name="Harris D.E."/>
            <person name="Hidalgo J."/>
            <person name="Hodgson G."/>
            <person name="Holroyd S."/>
            <person name="Hornsby T."/>
            <person name="Howarth S."/>
            <person name="Huckle E.J."/>
            <person name="Hunt S."/>
            <person name="Jagels K."/>
            <person name="James K.D."/>
            <person name="Jones L."/>
            <person name="Jones M."/>
            <person name="Leather S."/>
            <person name="McDonald S."/>
            <person name="McLean J."/>
            <person name="Mooney P."/>
            <person name="Moule S."/>
            <person name="Mungall K.L."/>
            <person name="Murphy L.D."/>
            <person name="Niblett D."/>
            <person name="Odell C."/>
            <person name="Oliver K."/>
            <person name="O'Neil S."/>
            <person name="Pearson D."/>
            <person name="Quail M.A."/>
            <person name="Rabbinowitsch E."/>
            <person name="Rutherford K.M."/>
            <person name="Rutter S."/>
            <person name="Saunders D."/>
            <person name="Seeger K."/>
            <person name="Sharp S."/>
            <person name="Skelton J."/>
            <person name="Simmonds M.N."/>
            <person name="Squares R."/>
            <person name="Squares S."/>
            <person name="Stevens K."/>
            <person name="Taylor K."/>
            <person name="Taylor R.G."/>
            <person name="Tivey A."/>
            <person name="Walsh S.V."/>
            <person name="Warren T."/>
            <person name="Whitehead S."/>
            <person name="Woodward J.R."/>
            <person name="Volckaert G."/>
            <person name="Aert R."/>
            <person name="Robben J."/>
            <person name="Grymonprez B."/>
            <person name="Weltjens I."/>
            <person name="Vanstreels E."/>
            <person name="Rieger M."/>
            <person name="Schaefer M."/>
            <person name="Mueller-Auer S."/>
            <person name="Gabel C."/>
            <person name="Fuchs M."/>
            <person name="Duesterhoeft A."/>
            <person name="Fritzc C."/>
            <person name="Holzer E."/>
            <person name="Moestl D."/>
            <person name="Hilbert H."/>
            <person name="Borzym K."/>
            <person name="Langer I."/>
            <person name="Beck A."/>
            <person name="Lehrach H."/>
            <person name="Reinhardt R."/>
            <person name="Pohl T.M."/>
            <person name="Eger P."/>
            <person name="Zimmermann W."/>
            <person name="Wedler H."/>
            <person name="Wambutt R."/>
            <person name="Purnelle B."/>
            <person name="Goffeau A."/>
            <person name="Cadieu E."/>
            <person name="Dreano S."/>
            <person name="Gloux S."/>
            <person name="Lelaure V."/>
            <person name="Mottier S."/>
            <person name="Galibert F."/>
            <person name="Aves S.J."/>
            <person name="Xiang Z."/>
            <person name="Hunt C."/>
            <person name="Moore K."/>
            <person name="Hurst S.M."/>
            <person name="Lucas M."/>
            <person name="Rochet M."/>
            <person name="Gaillardin C."/>
            <person name="Tallada V.A."/>
            <person name="Garzon A."/>
            <person name="Thode G."/>
            <person name="Daga R.R."/>
            <person name="Cruzado L."/>
            <person name="Jimenez J."/>
            <person name="Sanchez M."/>
            <person name="del Rey F."/>
            <person name="Benito J."/>
            <person name="Dominguez A."/>
            <person name="Revuelta J.L."/>
            <person name="Moreno S."/>
            <person name="Armstrong J."/>
            <person name="Forsburg S.L."/>
            <person name="Cerutti L."/>
            <person name="Lowe T."/>
            <person name="McCombie W.R."/>
            <person name="Paulsen I."/>
            <person name="Potashkin J."/>
            <person name="Shpakovski G.V."/>
            <person name="Ussery D."/>
            <person name="Barrell B.G."/>
            <person name="Nurse P."/>
        </authorList>
    </citation>
    <scope>NUCLEOTIDE SEQUENCE [LARGE SCALE GENOMIC DNA]</scope>
    <source>
        <strain>972 / ATCC 24843</strain>
    </source>
</reference>
<reference key="2">
    <citation type="journal article" date="2008" name="J. Proteome Res.">
        <title>Phosphoproteome analysis of fission yeast.</title>
        <authorList>
            <person name="Wilson-Grady J.T."/>
            <person name="Villen J."/>
            <person name="Gygi S.P."/>
        </authorList>
    </citation>
    <scope>PHOSPHORYLATION [LARGE SCALE ANALYSIS] AT SER-68 AND THR-92</scope>
    <scope>IDENTIFICATION BY MASS SPECTROMETRY</scope>
</reference>
<protein>
    <recommendedName>
        <fullName>Uncharacterized protein C2H8.05c</fullName>
    </recommendedName>
</protein>
<accession>Q9Y7S8</accession>
<accession>Q9UUN4</accession>
<gene>
    <name type="ORF">SPCC2H8.05c</name>
    <name type="ORF">SPCC63.01c</name>
</gene>
<proteinExistence type="evidence at protein level"/>
<evidence type="ECO:0000256" key="1">
    <source>
        <dbReference type="SAM" id="MobiDB-lite"/>
    </source>
</evidence>
<evidence type="ECO:0000269" key="2">
    <source>
    </source>
</evidence>
<keyword id="KW-0597">Phosphoprotein</keyword>
<keyword id="KW-1185">Reference proteome</keyword>
<dbReference type="EMBL" id="CU329672">
    <property type="protein sequence ID" value="CAB40209.3"/>
    <property type="molecule type" value="Genomic_DNA"/>
</dbReference>
<dbReference type="PIR" id="T41502">
    <property type="entry name" value="T41502"/>
</dbReference>
<dbReference type="RefSeq" id="NP_587975.2">
    <property type="nucleotide sequence ID" value="NM_001022966.2"/>
</dbReference>
<dbReference type="SMR" id="Q9Y7S8"/>
<dbReference type="BioGRID" id="275780">
    <property type="interactions" value="15"/>
</dbReference>
<dbReference type="STRING" id="284812.Q9Y7S8"/>
<dbReference type="iPTMnet" id="Q9Y7S8"/>
<dbReference type="PaxDb" id="4896-SPCC2H8.05c.1"/>
<dbReference type="EnsemblFungi" id="SPCC2H8.05c.1">
    <property type="protein sequence ID" value="SPCC2H8.05c.1:pep"/>
    <property type="gene ID" value="SPCC2H8.05c"/>
</dbReference>
<dbReference type="GeneID" id="2539210"/>
<dbReference type="KEGG" id="spo:2539210"/>
<dbReference type="PomBase" id="SPCC2H8.05c"/>
<dbReference type="VEuPathDB" id="FungiDB:SPCC2H8.05c"/>
<dbReference type="HOGENOM" id="CLU_1161722_0_0_1"/>
<dbReference type="InParanoid" id="Q9Y7S8"/>
<dbReference type="OMA" id="PCVSWKL"/>
<dbReference type="PRO" id="PR:Q9Y7S8"/>
<dbReference type="Proteomes" id="UP000002485">
    <property type="component" value="Chromosome III"/>
</dbReference>
<dbReference type="GO" id="GO:0044732">
    <property type="term" value="C:mitotic spindle pole body"/>
    <property type="evidence" value="ECO:0007005"/>
    <property type="project" value="PomBase"/>
</dbReference>
<dbReference type="GO" id="GO:0005634">
    <property type="term" value="C:nucleus"/>
    <property type="evidence" value="ECO:0007005"/>
    <property type="project" value="PomBase"/>
</dbReference>
<dbReference type="GO" id="GO:0035861">
    <property type="term" value="C:site of double-strand break"/>
    <property type="evidence" value="ECO:0000314"/>
    <property type="project" value="PomBase"/>
</dbReference>
<sequence>MQDSSKNKQPCVSWKVSPLKAKAMSPDDVSRLFCKSSTSSATRKHDPFHKLWDRLQPKAQSTIQRTSSLPVPSSSNFKERLNNIGGLKRSRTLESSYEDETETANKLSRVSSLVSVIRQTIDRKKSLERRVREEQEEKTDNEDDNDVEISTQESLENNGLAEKKDDTSSLATLEDDIEGQEFSFDDQDLQMLQDIEDQWLSSQKQQGSPLTSDHISK</sequence>
<name>YCX5_SCHPO</name>
<feature type="chain" id="PRO_0000116559" description="Uncharacterized protein C2H8.05c">
    <location>
        <begin position="1"/>
        <end position="217"/>
    </location>
</feature>
<feature type="region of interest" description="Disordered" evidence="1">
    <location>
        <begin position="59"/>
        <end position="105"/>
    </location>
</feature>
<feature type="region of interest" description="Disordered" evidence="1">
    <location>
        <begin position="124"/>
        <end position="217"/>
    </location>
</feature>
<feature type="compositionally biased region" description="Polar residues" evidence="1">
    <location>
        <begin position="59"/>
        <end position="76"/>
    </location>
</feature>
<feature type="compositionally biased region" description="Basic and acidic residues" evidence="1">
    <location>
        <begin position="124"/>
        <end position="135"/>
    </location>
</feature>
<feature type="compositionally biased region" description="Acidic residues" evidence="1">
    <location>
        <begin position="136"/>
        <end position="147"/>
    </location>
</feature>
<feature type="compositionally biased region" description="Polar residues" evidence="1">
    <location>
        <begin position="148"/>
        <end position="157"/>
    </location>
</feature>
<feature type="compositionally biased region" description="Acidic residues" evidence="1">
    <location>
        <begin position="173"/>
        <end position="188"/>
    </location>
</feature>
<feature type="compositionally biased region" description="Polar residues" evidence="1">
    <location>
        <begin position="199"/>
        <end position="217"/>
    </location>
</feature>
<feature type="modified residue" description="Phosphoserine" evidence="2">
    <location>
        <position position="68"/>
    </location>
</feature>
<feature type="modified residue" description="Phosphothreonine" evidence="2">
    <location>
        <position position="92"/>
    </location>
</feature>
<organism>
    <name type="scientific">Schizosaccharomyces pombe (strain 972 / ATCC 24843)</name>
    <name type="common">Fission yeast</name>
    <dbReference type="NCBI Taxonomy" id="284812"/>
    <lineage>
        <taxon>Eukaryota</taxon>
        <taxon>Fungi</taxon>
        <taxon>Dikarya</taxon>
        <taxon>Ascomycota</taxon>
        <taxon>Taphrinomycotina</taxon>
        <taxon>Schizosaccharomycetes</taxon>
        <taxon>Schizosaccharomycetales</taxon>
        <taxon>Schizosaccharomycetaceae</taxon>
        <taxon>Schizosaccharomyces</taxon>
    </lineage>
</organism>